<organism>
    <name type="scientific">Solanum lycopersicum</name>
    <name type="common">Tomato</name>
    <name type="synonym">Lycopersicon esculentum</name>
    <dbReference type="NCBI Taxonomy" id="4081"/>
    <lineage>
        <taxon>Eukaryota</taxon>
        <taxon>Viridiplantae</taxon>
        <taxon>Streptophyta</taxon>
        <taxon>Embryophyta</taxon>
        <taxon>Tracheophyta</taxon>
        <taxon>Spermatophyta</taxon>
        <taxon>Magnoliopsida</taxon>
        <taxon>eudicotyledons</taxon>
        <taxon>Gunneridae</taxon>
        <taxon>Pentapetalae</taxon>
        <taxon>asterids</taxon>
        <taxon>lamiids</taxon>
        <taxon>Solanales</taxon>
        <taxon>Solanaceae</taxon>
        <taxon>Solanoideae</taxon>
        <taxon>Solaneae</taxon>
        <taxon>Solanum</taxon>
        <taxon>Solanum subgen. Lycopersicon</taxon>
    </lineage>
</organism>
<feature type="transit peptide" description="Chloroplast" evidence="1">
    <location>
        <begin position="1"/>
        <end position="81"/>
    </location>
</feature>
<feature type="chain" id="PRO_0000018431" description="Lycopene beta cyclase, chloroplastic">
    <location>
        <begin position="82"/>
        <end position="500"/>
    </location>
</feature>
<feature type="binding site" evidence="1">
    <location>
        <begin position="86"/>
        <end position="114"/>
    </location>
    <ligand>
        <name>NAD(+)</name>
        <dbReference type="ChEBI" id="CHEBI:57540"/>
    </ligand>
</feature>
<gene>
    <name type="primary">LCY1</name>
    <name type="synonym">CRTL-1</name>
</gene>
<protein>
    <recommendedName>
        <fullName>Lycopene beta cyclase, chloroplastic</fullName>
        <ecNumber>5.5.1.19</ecNumber>
    </recommendedName>
</protein>
<dbReference type="EC" id="5.5.1.19"/>
<dbReference type="EMBL" id="X86452">
    <property type="protein sequence ID" value="CAA60170.1"/>
    <property type="molecule type" value="mRNA"/>
</dbReference>
<dbReference type="PIR" id="S66350">
    <property type="entry name" value="S66350"/>
</dbReference>
<dbReference type="PIR" id="S72505">
    <property type="entry name" value="S72505"/>
</dbReference>
<dbReference type="RefSeq" id="NP_001234226.1">
    <property type="nucleotide sequence ID" value="NM_001247297.2"/>
</dbReference>
<dbReference type="RefSeq" id="NP_001303688.1">
    <property type="nucleotide sequence ID" value="NM_001316759.1"/>
</dbReference>
<dbReference type="SMR" id="Q43503"/>
<dbReference type="FunCoup" id="Q43503">
    <property type="interactions" value="907"/>
</dbReference>
<dbReference type="STRING" id="4081.Q43503"/>
<dbReference type="PaxDb" id="4081-Solyc04g040190.1.1"/>
<dbReference type="EnsemblPlants" id="Solyc04g040190.1.1">
    <property type="protein sequence ID" value="Solyc04g040190.1.1.1"/>
    <property type="gene ID" value="Solyc04g040190.1"/>
</dbReference>
<dbReference type="GeneID" id="544104"/>
<dbReference type="Gramene" id="Solyc04g040190.1.1">
    <property type="protein sequence ID" value="Solyc04g040190.1.1.1"/>
    <property type="gene ID" value="Solyc04g040190.1"/>
</dbReference>
<dbReference type="KEGG" id="sly:544104"/>
<dbReference type="eggNOG" id="ENOG502QT2F">
    <property type="taxonomic scope" value="Eukaryota"/>
</dbReference>
<dbReference type="HOGENOM" id="CLU_032956_1_0_1"/>
<dbReference type="InParanoid" id="Q43503"/>
<dbReference type="OMA" id="FVLMDFR"/>
<dbReference type="OrthoDB" id="1716816at2759"/>
<dbReference type="PhylomeDB" id="Q43503"/>
<dbReference type="BioCyc" id="MetaCyc:MONOMER-12154"/>
<dbReference type="BRENDA" id="5.5.1.19">
    <property type="organism ID" value="3101"/>
</dbReference>
<dbReference type="UniPathway" id="UPA00802"/>
<dbReference type="UniPathway" id="UPA00805"/>
<dbReference type="Proteomes" id="UP000004994">
    <property type="component" value="Chromosome 4"/>
</dbReference>
<dbReference type="GO" id="GO:0009507">
    <property type="term" value="C:chloroplast"/>
    <property type="evidence" value="ECO:0007669"/>
    <property type="project" value="UniProtKB-SubCell"/>
</dbReference>
<dbReference type="GO" id="GO:0005739">
    <property type="term" value="C:mitochondrion"/>
    <property type="evidence" value="ECO:0000318"/>
    <property type="project" value="GO_Central"/>
</dbReference>
<dbReference type="GO" id="GO:0045436">
    <property type="term" value="F:lycopene beta cyclase activity"/>
    <property type="evidence" value="ECO:0000318"/>
    <property type="project" value="GO_Central"/>
</dbReference>
<dbReference type="GO" id="GO:0016491">
    <property type="term" value="F:oxidoreductase activity"/>
    <property type="evidence" value="ECO:0000318"/>
    <property type="project" value="GO_Central"/>
</dbReference>
<dbReference type="GO" id="GO:0016705">
    <property type="term" value="F:oxidoreductase activity, acting on paired donors, with incorporation or reduction of molecular oxygen"/>
    <property type="evidence" value="ECO:0007669"/>
    <property type="project" value="InterPro"/>
</dbReference>
<dbReference type="GO" id="GO:0016120">
    <property type="term" value="P:carotene biosynthetic process"/>
    <property type="evidence" value="ECO:0000318"/>
    <property type="project" value="GO_Central"/>
</dbReference>
<dbReference type="GO" id="GO:0006744">
    <property type="term" value="P:ubiquinone biosynthetic process"/>
    <property type="evidence" value="ECO:0000318"/>
    <property type="project" value="GO_Central"/>
</dbReference>
<dbReference type="GO" id="GO:0016123">
    <property type="term" value="P:xanthophyll biosynthetic process"/>
    <property type="evidence" value="ECO:0000318"/>
    <property type="project" value="GO_Central"/>
</dbReference>
<dbReference type="FunFam" id="3.50.50.60:FF:000101">
    <property type="entry name" value="lycopene epsilon cyclase, chloroplastic"/>
    <property type="match status" value="1"/>
</dbReference>
<dbReference type="Gene3D" id="3.50.50.60">
    <property type="entry name" value="FAD/NAD(P)-binding domain"/>
    <property type="match status" value="1"/>
</dbReference>
<dbReference type="InterPro" id="IPR036188">
    <property type="entry name" value="FAD/NAD-bd_sf"/>
</dbReference>
<dbReference type="InterPro" id="IPR010108">
    <property type="entry name" value="Lycopene_cyclase_b/e"/>
</dbReference>
<dbReference type="NCBIfam" id="TIGR01790">
    <property type="entry name" value="carotene-cycl"/>
    <property type="match status" value="1"/>
</dbReference>
<dbReference type="PANTHER" id="PTHR39757">
    <property type="match status" value="1"/>
</dbReference>
<dbReference type="PANTHER" id="PTHR39757:SF5">
    <property type="entry name" value="OS02G0190600 PROTEIN"/>
    <property type="match status" value="1"/>
</dbReference>
<dbReference type="Pfam" id="PF05834">
    <property type="entry name" value="Lycopene_cycl"/>
    <property type="match status" value="1"/>
</dbReference>
<dbReference type="PRINTS" id="PR00411">
    <property type="entry name" value="PNDRDTASEI"/>
</dbReference>
<dbReference type="SUPFAM" id="SSF51905">
    <property type="entry name" value="FAD/NAD(P)-binding domain"/>
    <property type="match status" value="1"/>
</dbReference>
<proteinExistence type="evidence at protein level"/>
<reference key="1">
    <citation type="journal article" date="1996" name="Plant Mol. Biol.">
        <title>Cloning and characterization of the cDNA for lycopene beta-cyclase from tomato reveals decrease in its expression during fruit ripening.</title>
        <authorList>
            <person name="Pecker I."/>
            <person name="Gabbay R."/>
            <person name="Cunningham F.X. Jr."/>
            <person name="Hirschberg J."/>
        </authorList>
    </citation>
    <scope>NUCLEOTIDE SEQUENCE [MRNA]</scope>
    <scope>CATALYTIC ACTIVITY</scope>
    <source>
        <strain>cv. VF36</strain>
        <tissue>Leaf</tissue>
    </source>
</reference>
<comment type="function">
    <text>Catalyzes the double cyclization reaction which converts lycopene to beta-carotene and neurosporene to beta-zeacarotene.</text>
</comment>
<comment type="catalytic activity">
    <reaction evidence="2">
        <text>a carotenoid psi-end group = a carotenoid beta-end derivative</text>
        <dbReference type="Rhea" id="RHEA:55620"/>
        <dbReference type="ChEBI" id="CHEBI:139114"/>
        <dbReference type="ChEBI" id="CHEBI:139120"/>
        <dbReference type="EC" id="5.5.1.19"/>
    </reaction>
</comment>
<comment type="pathway">
    <text>Carotenoid biosynthesis; beta-carotene biosynthesis.</text>
</comment>
<comment type="pathway">
    <text>Carotenoid biosynthesis; beta-zeacarotene biosynthesis.</text>
</comment>
<comment type="subcellular location">
    <subcellularLocation>
        <location>Plastid</location>
        <location>Chloroplast</location>
    </subcellularLocation>
</comment>
<comment type="similarity">
    <text evidence="3">Belongs to the lycopene cyclase family.</text>
</comment>
<keyword id="KW-0125">Carotenoid biosynthesis</keyword>
<keyword id="KW-0150">Chloroplast</keyword>
<keyword id="KW-0413">Isomerase</keyword>
<keyword id="KW-0520">NAD</keyword>
<keyword id="KW-0934">Plastid</keyword>
<keyword id="KW-1185">Reference proteome</keyword>
<keyword id="KW-0809">Transit peptide</keyword>
<sequence length="500" mass="56181">MDTLLKTPNNLEFLNPHHGFAVKASTFRSEKHHNFGSRKFCETLGRSVCVKGSSSALLELVPETKKENLDFELPMYDPSKGVVVDLAVVGGGPAGLAVAQQVSEAGLSVCSIDPNPKLIWPNNYGVWVDEFEAMDLLDCLDATWSGAAVYIDDNTAKDLHRPYGRVNRKQLKSKMMQKCIMNGVKFHQAKVIKVIHEESKSMLICNDGITIQATVVLDATGFSRSLVQYDKPYNPGYQVAYGILAEVEEHPFDVNKMVFMDWRDSHLKNNTDLKERNSRIPTFLYAMPFSSNRIFLEETSLVARPGLRIDDIQERMVARLNHLGIKVKSIEEDEHCLIPMGGPLPVLPQRVVGIGGTAGMVHPSTGYMVARTLAAAPVVANAIIQYLGSERSHSGNELSTAVWKDLWPIERRRQREFFCFGMDILLKLDLPATRRFFDAFFDLEPRYWHGFLSSRLFLPELIVFGLSLFSHASNTSRFEIMTKGTVPLVNMINNLLQDKE</sequence>
<evidence type="ECO:0000255" key="1"/>
<evidence type="ECO:0000269" key="2">
    <source>
    </source>
</evidence>
<evidence type="ECO:0000305" key="3"/>
<name>LCYB_SOLLC</name>
<accession>Q43503</accession>